<comment type="subcellular location">
    <subcellularLocation>
        <location evidence="3">Secreted</location>
    </subcellularLocation>
</comment>
<comment type="tissue specificity">
    <text evidence="8 9">Expressed by the venom duct. Is mostly present the middle of the duct (part 3, 85%) and just after (part 4, 11%).</text>
</comment>
<comment type="domain">
    <text evidence="7">The cysteine framework is III (CC-C-C-CC). Classified in the M-1 branch, since 1 residue stands between the fourth and the fifth cysteine residues.</text>
</comment>
<comment type="PTM">
    <text evidence="3">Contains 3 disulfide bonds.</text>
</comment>
<comment type="mass spectrometry" mass="1722.553" error="0.02" method="Electrospray" evidence="3"/>
<comment type="similarity">
    <text evidence="7">Belongs to the conotoxin M superfamily.</text>
</comment>
<keyword id="KW-0027">Amidation</keyword>
<keyword id="KW-0903">Direct protein sequencing</keyword>
<keyword id="KW-1015">Disulfide bond</keyword>
<keyword id="KW-0964">Secreted</keyword>
<keyword id="KW-0732">Signal</keyword>
<keyword id="KW-0800">Toxin</keyword>
<accession>Q9BPI0</accession>
<organism>
    <name type="scientific">Conus textile</name>
    <name type="common">Cloth-of-gold cone</name>
    <dbReference type="NCBI Taxonomy" id="6494"/>
    <lineage>
        <taxon>Eukaryota</taxon>
        <taxon>Metazoa</taxon>
        <taxon>Spiralia</taxon>
        <taxon>Lophotrochozoa</taxon>
        <taxon>Mollusca</taxon>
        <taxon>Gastropoda</taxon>
        <taxon>Caenogastropoda</taxon>
        <taxon>Neogastropoda</taxon>
        <taxon>Conoidea</taxon>
        <taxon>Conidae</taxon>
        <taxon>Conus</taxon>
        <taxon>Cylinder</taxon>
    </lineage>
</organism>
<evidence type="ECO:0000250" key="1">
    <source>
        <dbReference type="UniProtKB" id="Q5EHP3"/>
    </source>
</evidence>
<evidence type="ECO:0000255" key="2"/>
<evidence type="ECO:0000269" key="3">
    <source>
    </source>
</evidence>
<evidence type="ECO:0000269" key="4">
    <source>
    </source>
</evidence>
<evidence type="ECO:0000269" key="5">
    <source>
    </source>
</evidence>
<evidence type="ECO:0000303" key="6">
    <source>
    </source>
</evidence>
<evidence type="ECO:0000305" key="7"/>
<evidence type="ECO:0000305" key="8">
    <source>
    </source>
</evidence>
<evidence type="ECO:0000305" key="9">
    <source>
    </source>
</evidence>
<evidence type="ECO:0000312" key="10">
    <source>
        <dbReference type="EMBL" id="AAG60372.1"/>
    </source>
</evidence>
<dbReference type="EMBL" id="AF214944">
    <property type="protein sequence ID" value="AAG60372.1"/>
    <property type="molecule type" value="mRNA"/>
</dbReference>
<dbReference type="ConoServer" id="631">
    <property type="toxin name" value="TxMLKM-021 precursor"/>
</dbReference>
<dbReference type="GO" id="GO:0005576">
    <property type="term" value="C:extracellular region"/>
    <property type="evidence" value="ECO:0007669"/>
    <property type="project" value="UniProtKB-SubCell"/>
</dbReference>
<dbReference type="GO" id="GO:0008200">
    <property type="term" value="F:ion channel inhibitor activity"/>
    <property type="evidence" value="ECO:0007669"/>
    <property type="project" value="InterPro"/>
</dbReference>
<dbReference type="GO" id="GO:0090729">
    <property type="term" value="F:toxin activity"/>
    <property type="evidence" value="ECO:0007669"/>
    <property type="project" value="UniProtKB-KW"/>
</dbReference>
<dbReference type="InterPro" id="IPR004214">
    <property type="entry name" value="Conotoxin"/>
</dbReference>
<dbReference type="Pfam" id="PF02950">
    <property type="entry name" value="Conotoxin"/>
    <property type="match status" value="1"/>
</dbReference>
<sequence length="71" mass="8074">MLKMGVVLFIFLVLFPLATLQLDADQPVERYAENKQLLNTDERREIILSALRTRVCCPFGGCHELCQCCEG</sequence>
<reference key="1">
    <citation type="journal article" date="2001" name="Mol. Biol. Evol.">
        <title>Mechanisms for evolving hypervariability: the case of conopeptides.</title>
        <authorList>
            <person name="Conticello S.G."/>
            <person name="Gilad Y."/>
            <person name="Avidan N."/>
            <person name="Ben-Asher E."/>
            <person name="Levy Z."/>
            <person name="Fainzilber M."/>
        </authorList>
    </citation>
    <scope>NUCLEOTIDE SEQUENCE [MRNA]</scope>
</reference>
<reference key="2">
    <citation type="journal article" date="2009" name="Proc. Natl. Acad. Sci. U.S.A.">
        <title>Rapid sensitive analysis of cysteine rich peptide venom components.</title>
        <authorList>
            <person name="Ueberheide B.M."/>
            <person name="Fenyo D."/>
            <person name="Alewood P.F."/>
            <person name="Chait B.T."/>
        </authorList>
    </citation>
    <scope>PROTEIN SEQUENCE OF 55-70</scope>
    <scope>SUBCELLULAR LOCATION</scope>
    <scope>MASS SPECTROMETRY</scope>
    <scope>AMIDATION AT GLU-70</scope>
    <source>
        <tissue>Venom</tissue>
    </source>
</reference>
<reference key="3">
    <citation type="journal article" date="2012" name="J. Proteome Res.">
        <title>Constrained de novo sequencing of conotoxins.</title>
        <authorList>
            <person name="Bhatia S."/>
            <person name="Kil Y.J."/>
            <person name="Ueberheide B."/>
            <person name="Chait B.T."/>
            <person name="Tayo L."/>
            <person name="Cruz L."/>
            <person name="Lu B."/>
            <person name="Yates J.R. III"/>
            <person name="Bern M."/>
        </authorList>
    </citation>
    <scope>IDENTIFICATION BY MASS SPECTROMETRY</scope>
    <scope>SUBCELLULAR LOCATION</scope>
    <scope>AMIDATION AT GLU-70</scope>
    <source>
        <tissue>Venom</tissue>
    </source>
</reference>
<reference key="4">
    <citation type="journal article" date="2012" name="Toxicon">
        <title>Secretion and maturation of conotoxins in the venom ducts of Conus textile.</title>
        <authorList>
            <person name="Dobson R."/>
            <person name="Collodoro M."/>
            <person name="Gilles N."/>
            <person name="Turtoi A."/>
            <person name="De Pauw E."/>
            <person name="Quinton L."/>
        </authorList>
    </citation>
    <scope>IDENTIFICATION BY MASS SPECTROMETRY</scope>
    <scope>TISSUE SPECIFICITY</scope>
    <scope>POSITION IN VENOM DUCT</scope>
    <scope>AMIDATION AT GLU-70</scope>
    <source>
        <tissue>Venom</tissue>
    </source>
</reference>
<feature type="signal peptide" evidence="2">
    <location>
        <begin position="1"/>
        <end position="24"/>
    </location>
</feature>
<feature type="propeptide" id="PRO_0000371273" evidence="3">
    <location>
        <begin position="25"/>
        <end position="54"/>
    </location>
</feature>
<feature type="peptide" id="PRO_0000371274" description="TxMLKM-021" evidence="3">
    <location>
        <begin position="55"/>
        <end position="70"/>
    </location>
</feature>
<feature type="modified residue" description="Glutamic acid 1-amide" evidence="3 4 5">
    <location>
        <position position="70"/>
    </location>
</feature>
<feature type="disulfide bond" evidence="1">
    <location>
        <begin position="56"/>
        <end position="68"/>
    </location>
</feature>
<feature type="disulfide bond" evidence="1">
    <location>
        <begin position="57"/>
        <end position="66"/>
    </location>
</feature>
<feature type="disulfide bond" evidence="1">
    <location>
        <begin position="62"/>
        <end position="69"/>
    </location>
</feature>
<proteinExistence type="evidence at protein level"/>
<name>CM32_CONTE</name>
<protein>
    <recommendedName>
        <fullName evidence="6 10">TxMLKM-021</fullName>
    </recommendedName>
    <alternativeName>
        <fullName evidence="7">Conotoxin 2</fullName>
    </alternativeName>
</protein>